<dbReference type="EMBL" id="L35340">
    <property type="protein sequence ID" value="AAA74599.1"/>
    <property type="molecule type" value="Genomic_DNA"/>
</dbReference>
<dbReference type="EMBL" id="AF010273">
    <property type="protein sequence ID" value="AAB69303.1"/>
    <property type="molecule type" value="Genomic_DNA"/>
</dbReference>
<dbReference type="GO" id="GO:0000786">
    <property type="term" value="C:nucleosome"/>
    <property type="evidence" value="ECO:0007669"/>
    <property type="project" value="UniProtKB-KW"/>
</dbReference>
<dbReference type="GO" id="GO:0005634">
    <property type="term" value="C:nucleus"/>
    <property type="evidence" value="ECO:0007669"/>
    <property type="project" value="UniProtKB-SubCell"/>
</dbReference>
<dbReference type="GO" id="GO:0003677">
    <property type="term" value="F:DNA binding"/>
    <property type="evidence" value="ECO:0007669"/>
    <property type="project" value="UniProtKB-KW"/>
</dbReference>
<dbReference type="GO" id="GO:0030261">
    <property type="term" value="P:chromosome condensation"/>
    <property type="evidence" value="ECO:0007669"/>
    <property type="project" value="UniProtKB-KW"/>
</dbReference>
<dbReference type="GO" id="GO:0035092">
    <property type="term" value="P:sperm DNA condensation"/>
    <property type="evidence" value="ECO:0007669"/>
    <property type="project" value="InterPro"/>
</dbReference>
<dbReference type="InterPro" id="IPR000221">
    <property type="entry name" value="Protamine_P1"/>
</dbReference>
<dbReference type="PROSITE" id="PS00048">
    <property type="entry name" value="PROTAMINE_P1"/>
    <property type="match status" value="1"/>
</dbReference>
<sequence>MARYRRHSRSRSRSRYRRRRRRRSRGRRRRTYRRSRRHSRRRRGRRRGYSRRRYSRRGRRRY</sequence>
<evidence type="ECO:0000256" key="1">
    <source>
        <dbReference type="SAM" id="MobiDB-lite"/>
    </source>
</evidence>
<evidence type="ECO:0000305" key="2"/>
<organism>
    <name type="scientific">Dasyurus viverrinus</name>
    <name type="common">Eastern quoll</name>
    <name type="synonym">Didelphis viverrina</name>
    <dbReference type="NCBI Taxonomy" id="9279"/>
    <lineage>
        <taxon>Eukaryota</taxon>
        <taxon>Metazoa</taxon>
        <taxon>Chordata</taxon>
        <taxon>Craniata</taxon>
        <taxon>Vertebrata</taxon>
        <taxon>Euteleostomi</taxon>
        <taxon>Mammalia</taxon>
        <taxon>Metatheria</taxon>
        <taxon>Dasyuromorphia</taxon>
        <taxon>Dasyuridae</taxon>
        <taxon>Dasyurus</taxon>
    </lineage>
</organism>
<protein>
    <recommendedName>
        <fullName>Sperm protamine P1</fullName>
    </recommendedName>
</protein>
<accession>P67835</accession>
<accession>P42133</accession>
<accession>P42135</accession>
<accession>Q71VG6</accession>
<name>HSP1_DASVI</name>
<proteinExistence type="evidence at transcript level"/>
<feature type="chain" id="PRO_0000191467" description="Sperm protamine P1">
    <location>
        <begin position="1"/>
        <end position="62"/>
    </location>
</feature>
<feature type="region of interest" description="Disordered" evidence="1">
    <location>
        <begin position="1"/>
        <end position="62"/>
    </location>
</feature>
<feature type="sequence conflict" description="In Ref. 1; AAA74599." evidence="2" ref="1">
    <original>H</original>
    <variation>R</variation>
    <location>
        <position position="7"/>
    </location>
</feature>
<feature type="sequence conflict" description="In Ref. 1; AAA74599." evidence="2" ref="1">
    <location>
        <position position="62"/>
    </location>
</feature>
<comment type="function">
    <text>Protamines substitute for histones in the chromatin of sperm during the haploid phase of spermatogenesis. They compact sperm DNA into a highly condensed, stable and inactive complex.</text>
</comment>
<comment type="subcellular location">
    <subcellularLocation>
        <location>Nucleus</location>
    </subcellularLocation>
    <subcellularLocation>
        <location>Chromosome</location>
    </subcellularLocation>
</comment>
<comment type="tissue specificity">
    <text>Testis.</text>
</comment>
<comment type="similarity">
    <text evidence="2">Belongs to the protamine P1 family.</text>
</comment>
<reference key="1">
    <citation type="journal article" date="1995" name="Proc. R. Soc. B">
        <title>Molecular phylogeny and evolution of marsupial protamine P1 genes.</title>
        <authorList>
            <person name="Retief J.D."/>
            <person name="Krajewski C."/>
            <person name="Westerman M."/>
            <person name="Winkfein R.J."/>
            <person name="Dixon G.H."/>
        </authorList>
    </citation>
    <scope>NUCLEOTIDE SEQUENCE [GENOMIC DNA]</scope>
    <source>
        <tissue>Sperm</tissue>
    </source>
</reference>
<reference key="2">
    <citation type="journal article" date="1997" name="J. Mammal. Evol.">
        <title>Reconstructing the taxonomic radiation of dasyurine marsupials with cytochrome b, 12S rRNA, and protamine P1 gene trees.</title>
        <authorList>
            <person name="Krajewski C."/>
            <person name="Young J."/>
            <person name="Buckley L."/>
            <person name="Woolley P.A."/>
            <person name="Westerman M."/>
        </authorList>
    </citation>
    <scope>NUCLEOTIDE SEQUENCE [GENOMIC DNA]</scope>
</reference>
<gene>
    <name type="primary">PRM1</name>
</gene>
<keyword id="KW-0158">Chromosome</keyword>
<keyword id="KW-0217">Developmental protein</keyword>
<keyword id="KW-0221">Differentiation</keyword>
<keyword id="KW-0226">DNA condensation</keyword>
<keyword id="KW-0238">DNA-binding</keyword>
<keyword id="KW-0544">Nucleosome core</keyword>
<keyword id="KW-0539">Nucleus</keyword>
<keyword id="KW-0744">Spermatogenesis</keyword>